<sequence>MFEYLPELMKGLHTSLTLTVASLIVALILALIFTIILTLKTPVLVWLVRGYITLFTGTPLLVQIFLIYYGPGQFPTLQEYPALWHLLSEPWLCALIALSLNSAAYTTQLFYGAIRAIPEGQWQSCSALGMSKKDTLAILLPYAFKRSLSSYSNEVVLVFKSTSLAYTITLMEVMGYSQLLYGRTYDVMVFGAAGIIYLVVNGLLTLMMRLIERKALAFERRN</sequence>
<keyword id="KW-0029">Amino-acid transport</keyword>
<keyword id="KW-0997">Cell inner membrane</keyword>
<keyword id="KW-1003">Cell membrane</keyword>
<keyword id="KW-0472">Membrane</keyword>
<keyword id="KW-1185">Reference proteome</keyword>
<keyword id="KW-0812">Transmembrane</keyword>
<keyword id="KW-1133">Transmembrane helix</keyword>
<keyword id="KW-0813">Transport</keyword>
<protein>
    <recommendedName>
        <fullName>Arginine ABC transporter permease protein ArtM</fullName>
    </recommendedName>
</protein>
<organism>
    <name type="scientific">Escherichia coli O6:H1 (strain CFT073 / ATCC 700928 / UPEC)</name>
    <dbReference type="NCBI Taxonomy" id="199310"/>
    <lineage>
        <taxon>Bacteria</taxon>
        <taxon>Pseudomonadati</taxon>
        <taxon>Pseudomonadota</taxon>
        <taxon>Gammaproteobacteria</taxon>
        <taxon>Enterobacterales</taxon>
        <taxon>Enterobacteriaceae</taxon>
        <taxon>Escherichia</taxon>
    </lineage>
</organism>
<name>ARTM_ECOL6</name>
<reference key="1">
    <citation type="journal article" date="2002" name="Proc. Natl. Acad. Sci. U.S.A.">
        <title>Extensive mosaic structure revealed by the complete genome sequence of uropathogenic Escherichia coli.</title>
        <authorList>
            <person name="Welch R.A."/>
            <person name="Burland V."/>
            <person name="Plunkett G. III"/>
            <person name="Redford P."/>
            <person name="Roesch P."/>
            <person name="Rasko D."/>
            <person name="Buckles E.L."/>
            <person name="Liou S.-R."/>
            <person name="Boutin A."/>
            <person name="Hackett J."/>
            <person name="Stroud D."/>
            <person name="Mayhew G.F."/>
            <person name="Rose D.J."/>
            <person name="Zhou S."/>
            <person name="Schwartz D.C."/>
            <person name="Perna N.T."/>
            <person name="Mobley H.L.T."/>
            <person name="Donnenberg M.S."/>
            <person name="Blattner F.R."/>
        </authorList>
    </citation>
    <scope>NUCLEOTIDE SEQUENCE [LARGE SCALE GENOMIC DNA]</scope>
    <source>
        <strain>CFT073 / ATCC 700928 / UPEC</strain>
    </source>
</reference>
<gene>
    <name type="primary">artM</name>
    <name type="ordered locus">c0994</name>
</gene>
<evidence type="ECO:0000250" key="1"/>
<evidence type="ECO:0000255" key="2"/>
<evidence type="ECO:0000255" key="3">
    <source>
        <dbReference type="PROSITE-ProRule" id="PRU00441"/>
    </source>
</evidence>
<evidence type="ECO:0000305" key="4"/>
<dbReference type="EMBL" id="AE014075">
    <property type="protein sequence ID" value="AAN79467.1"/>
    <property type="molecule type" value="Genomic_DNA"/>
</dbReference>
<dbReference type="RefSeq" id="WP_000464491.1">
    <property type="nucleotide sequence ID" value="NZ_CP051263.1"/>
</dbReference>
<dbReference type="SMR" id="P0AE31"/>
<dbReference type="STRING" id="199310.c0994"/>
<dbReference type="GeneID" id="75202487"/>
<dbReference type="KEGG" id="ecc:c0994"/>
<dbReference type="eggNOG" id="COG4160">
    <property type="taxonomic scope" value="Bacteria"/>
</dbReference>
<dbReference type="HOGENOM" id="CLU_019602_1_4_6"/>
<dbReference type="BioCyc" id="ECOL199310:C0994-MONOMER"/>
<dbReference type="Proteomes" id="UP000001410">
    <property type="component" value="Chromosome"/>
</dbReference>
<dbReference type="GO" id="GO:0043190">
    <property type="term" value="C:ATP-binding cassette (ABC) transporter complex"/>
    <property type="evidence" value="ECO:0007669"/>
    <property type="project" value="InterPro"/>
</dbReference>
<dbReference type="GO" id="GO:0022857">
    <property type="term" value="F:transmembrane transporter activity"/>
    <property type="evidence" value="ECO:0007669"/>
    <property type="project" value="InterPro"/>
</dbReference>
<dbReference type="GO" id="GO:0006865">
    <property type="term" value="P:amino acid transport"/>
    <property type="evidence" value="ECO:0007669"/>
    <property type="project" value="UniProtKB-KW"/>
</dbReference>
<dbReference type="CDD" id="cd06261">
    <property type="entry name" value="TM_PBP2"/>
    <property type="match status" value="1"/>
</dbReference>
<dbReference type="FunFam" id="1.10.3720.10:FF:000017">
    <property type="entry name" value="Arginine ABC transporter permease protein ArtM"/>
    <property type="match status" value="1"/>
</dbReference>
<dbReference type="Gene3D" id="1.10.3720.10">
    <property type="entry name" value="MetI-like"/>
    <property type="match status" value="1"/>
</dbReference>
<dbReference type="InterPro" id="IPR010065">
    <property type="entry name" value="AA_ABC_transptr_permease_3TM"/>
</dbReference>
<dbReference type="InterPro" id="IPR043429">
    <property type="entry name" value="ArtM/GltK/GlnP/TcyL/YhdX-like"/>
</dbReference>
<dbReference type="InterPro" id="IPR000515">
    <property type="entry name" value="MetI-like"/>
</dbReference>
<dbReference type="InterPro" id="IPR035906">
    <property type="entry name" value="MetI-like_sf"/>
</dbReference>
<dbReference type="NCBIfam" id="TIGR01726">
    <property type="entry name" value="HEQRo_perm_3TM"/>
    <property type="match status" value="1"/>
</dbReference>
<dbReference type="NCBIfam" id="NF008336">
    <property type="entry name" value="PRK11122.1"/>
    <property type="match status" value="1"/>
</dbReference>
<dbReference type="PANTHER" id="PTHR30614:SF10">
    <property type="entry name" value="ARGININE ABC TRANSPORTER PERMEASE PROTEIN ARTM"/>
    <property type="match status" value="1"/>
</dbReference>
<dbReference type="PANTHER" id="PTHR30614">
    <property type="entry name" value="MEMBRANE COMPONENT OF AMINO ACID ABC TRANSPORTER"/>
    <property type="match status" value="1"/>
</dbReference>
<dbReference type="Pfam" id="PF00528">
    <property type="entry name" value="BPD_transp_1"/>
    <property type="match status" value="1"/>
</dbReference>
<dbReference type="SUPFAM" id="SSF161098">
    <property type="entry name" value="MetI-like"/>
    <property type="match status" value="1"/>
</dbReference>
<dbReference type="PROSITE" id="PS50928">
    <property type="entry name" value="ABC_TM1"/>
    <property type="match status" value="1"/>
</dbReference>
<accession>P0AE31</accession>
<accession>P30862</accession>
<accession>P77311</accession>
<proteinExistence type="inferred from homology"/>
<comment type="function">
    <text evidence="1">Part of the ABC transporter complex ArtPIQMJ involved in arginine transport. Probably responsible for the translocation of the substrate across the membrane (By similarity).</text>
</comment>
<comment type="subunit">
    <text evidence="1">The complex is composed of two ATP-binding proteins (ArtP), two transmembrane proteins (ArtM and ArtQ) and two solute-binding proteins (ArtJ and ArtI).</text>
</comment>
<comment type="subcellular location">
    <subcellularLocation>
        <location>Cell inner membrane</location>
        <topology>Multi-pass membrane protein</topology>
    </subcellularLocation>
</comment>
<comment type="similarity">
    <text evidence="4">Belongs to the binding-protein-dependent transport system permease family. HisMQ subfamily.</text>
</comment>
<feature type="chain" id="PRO_0000059959" description="Arginine ABC transporter permease protein ArtM">
    <location>
        <begin position="1"/>
        <end position="222"/>
    </location>
</feature>
<feature type="topological domain" description="Periplasmic" evidence="2">
    <location>
        <begin position="1"/>
        <end position="15"/>
    </location>
</feature>
<feature type="transmembrane region" description="Helical" evidence="3">
    <location>
        <begin position="16"/>
        <end position="36"/>
    </location>
</feature>
<feature type="topological domain" description="Cytoplasmic" evidence="2">
    <location>
        <begin position="37"/>
        <end position="49"/>
    </location>
</feature>
<feature type="transmembrane region" description="Helical" evidence="3">
    <location>
        <begin position="50"/>
        <end position="70"/>
    </location>
</feature>
<feature type="topological domain" description="Periplasmic" evidence="2">
    <location>
        <begin position="71"/>
        <end position="79"/>
    </location>
</feature>
<feature type="transmembrane region" description="Helical" evidence="3">
    <location>
        <begin position="80"/>
        <end position="100"/>
    </location>
</feature>
<feature type="topological domain" description="Cytoplasmic" evidence="2">
    <location>
        <begin position="101"/>
        <end position="154"/>
    </location>
</feature>
<feature type="transmembrane region" description="Helical" evidence="3">
    <location>
        <begin position="155"/>
        <end position="175"/>
    </location>
</feature>
<feature type="topological domain" description="Periplasmic" evidence="2">
    <location>
        <begin position="176"/>
        <end position="186"/>
    </location>
</feature>
<feature type="transmembrane region" description="Helical" evidence="3">
    <location>
        <begin position="187"/>
        <end position="207"/>
    </location>
</feature>
<feature type="topological domain" description="Cytoplasmic" evidence="2">
    <location>
        <begin position="208"/>
        <end position="222"/>
    </location>
</feature>
<feature type="domain" description="ABC transmembrane type-1" evidence="3">
    <location>
        <begin position="12"/>
        <end position="208"/>
    </location>
</feature>